<accession>Q85FW5</accession>
<organism>
    <name type="scientific">Cyanidioschyzon merolae (strain NIES-3377 / 10D)</name>
    <name type="common">Unicellular red alga</name>
    <dbReference type="NCBI Taxonomy" id="280699"/>
    <lineage>
        <taxon>Eukaryota</taxon>
        <taxon>Rhodophyta</taxon>
        <taxon>Bangiophyceae</taxon>
        <taxon>Cyanidiales</taxon>
        <taxon>Cyanidiaceae</taxon>
        <taxon>Cyanidioschyzon</taxon>
    </lineage>
</organism>
<keyword id="KW-0028">Amino-acid biosynthesis</keyword>
<keyword id="KW-0055">Arginine biosynthesis</keyword>
<keyword id="KW-0067">ATP-binding</keyword>
<keyword id="KW-0150">Chloroplast</keyword>
<keyword id="KW-0418">Kinase</keyword>
<keyword id="KW-0547">Nucleotide-binding</keyword>
<keyword id="KW-0934">Plastid</keyword>
<keyword id="KW-1185">Reference proteome</keyword>
<keyword id="KW-0808">Transferase</keyword>
<name>ARGB_CYAM1</name>
<protein>
    <recommendedName>
        <fullName evidence="1">Acetylglutamate kinase</fullName>
        <ecNumber evidence="1">2.7.2.8</ecNumber>
    </recommendedName>
    <alternativeName>
        <fullName evidence="1">N-acetyl-L-glutamate 5-phosphotransferase</fullName>
    </alternativeName>
    <alternativeName>
        <fullName evidence="1">NAG kinase</fullName>
        <shortName evidence="1">NAGK</shortName>
    </alternativeName>
</protein>
<evidence type="ECO:0000255" key="1">
    <source>
        <dbReference type="HAMAP-Rule" id="MF_00082"/>
    </source>
</evidence>
<dbReference type="EC" id="2.7.2.8" evidence="1"/>
<dbReference type="EMBL" id="AB002583">
    <property type="protein sequence ID" value="BAC76228.1"/>
    <property type="molecule type" value="Genomic_DNA"/>
</dbReference>
<dbReference type="RefSeq" id="NP_849066.1">
    <property type="nucleotide sequence ID" value="NC_004799.1"/>
</dbReference>
<dbReference type="SMR" id="Q85FW5"/>
<dbReference type="STRING" id="280699.Q85FW5"/>
<dbReference type="EnsemblPlants" id="CMV160CT">
    <property type="protein sequence ID" value="CMV160CT"/>
    <property type="gene ID" value="CMV160C"/>
</dbReference>
<dbReference type="GeneID" id="844864"/>
<dbReference type="Gramene" id="CMV160CT">
    <property type="protein sequence ID" value="CMV160CT"/>
    <property type="gene ID" value="CMV160C"/>
</dbReference>
<dbReference type="KEGG" id="cme:CymeCp134"/>
<dbReference type="eggNOG" id="KOG2436">
    <property type="taxonomic scope" value="Eukaryota"/>
</dbReference>
<dbReference type="HOGENOM" id="CLU_053680_0_1_1"/>
<dbReference type="UniPathway" id="UPA00068">
    <property type="reaction ID" value="UER00107"/>
</dbReference>
<dbReference type="Proteomes" id="UP000007014">
    <property type="component" value="Chloroplast"/>
</dbReference>
<dbReference type="GO" id="GO:0009507">
    <property type="term" value="C:chloroplast"/>
    <property type="evidence" value="ECO:0007669"/>
    <property type="project" value="UniProtKB-SubCell"/>
</dbReference>
<dbReference type="GO" id="GO:0003991">
    <property type="term" value="F:acetylglutamate kinase activity"/>
    <property type="evidence" value="ECO:0007669"/>
    <property type="project" value="UniProtKB-UniRule"/>
</dbReference>
<dbReference type="GO" id="GO:0034618">
    <property type="term" value="F:arginine binding"/>
    <property type="evidence" value="ECO:0007669"/>
    <property type="project" value="EnsemblPlants"/>
</dbReference>
<dbReference type="GO" id="GO:0005524">
    <property type="term" value="F:ATP binding"/>
    <property type="evidence" value="ECO:0007669"/>
    <property type="project" value="UniProtKB-UniRule"/>
</dbReference>
<dbReference type="GO" id="GO:0042450">
    <property type="term" value="P:arginine biosynthetic process via ornithine"/>
    <property type="evidence" value="ECO:0007669"/>
    <property type="project" value="UniProtKB-UniRule"/>
</dbReference>
<dbReference type="GO" id="GO:0006526">
    <property type="term" value="P:L-arginine biosynthetic process"/>
    <property type="evidence" value="ECO:0007669"/>
    <property type="project" value="UniProtKB-UniPathway"/>
</dbReference>
<dbReference type="CDD" id="cd04250">
    <property type="entry name" value="AAK_NAGK-C"/>
    <property type="match status" value="1"/>
</dbReference>
<dbReference type="FunFam" id="3.40.1160.10:FF:000004">
    <property type="entry name" value="Acetylglutamate kinase"/>
    <property type="match status" value="1"/>
</dbReference>
<dbReference type="Gene3D" id="3.40.1160.10">
    <property type="entry name" value="Acetylglutamate kinase-like"/>
    <property type="match status" value="1"/>
</dbReference>
<dbReference type="HAMAP" id="MF_00082">
    <property type="entry name" value="ArgB"/>
    <property type="match status" value="1"/>
</dbReference>
<dbReference type="InterPro" id="IPR036393">
    <property type="entry name" value="AceGlu_kinase-like_sf"/>
</dbReference>
<dbReference type="InterPro" id="IPR004662">
    <property type="entry name" value="AcgluKinase_fam"/>
</dbReference>
<dbReference type="InterPro" id="IPR037528">
    <property type="entry name" value="ArgB"/>
</dbReference>
<dbReference type="InterPro" id="IPR001048">
    <property type="entry name" value="Asp/Glu/Uridylate_kinase"/>
</dbReference>
<dbReference type="InterPro" id="IPR001057">
    <property type="entry name" value="Glu/AcGlu_kinase"/>
</dbReference>
<dbReference type="InterPro" id="IPR041727">
    <property type="entry name" value="NAGK-C"/>
</dbReference>
<dbReference type="NCBIfam" id="TIGR00761">
    <property type="entry name" value="argB"/>
    <property type="match status" value="1"/>
</dbReference>
<dbReference type="PANTHER" id="PTHR23342">
    <property type="entry name" value="N-ACETYLGLUTAMATE SYNTHASE"/>
    <property type="match status" value="1"/>
</dbReference>
<dbReference type="PANTHER" id="PTHR23342:SF0">
    <property type="entry name" value="N-ACETYLGLUTAMATE SYNTHASE, MITOCHONDRIAL"/>
    <property type="match status" value="1"/>
</dbReference>
<dbReference type="Pfam" id="PF00696">
    <property type="entry name" value="AA_kinase"/>
    <property type="match status" value="1"/>
</dbReference>
<dbReference type="PIRSF" id="PIRSF000728">
    <property type="entry name" value="NAGK"/>
    <property type="match status" value="1"/>
</dbReference>
<dbReference type="PRINTS" id="PR00474">
    <property type="entry name" value="GLU5KINASE"/>
</dbReference>
<dbReference type="SUPFAM" id="SSF53633">
    <property type="entry name" value="Carbamate kinase-like"/>
    <property type="match status" value="1"/>
</dbReference>
<geneLocation type="chloroplast"/>
<sequence length="290" mass="31476">MQQQINPEIIQEISDDLRVQVLTEALPYIQKWRNEIMVIKYGGAVVKQDADIIKDILFLTCCGFQIVVVHGGGPLINEWLKQLNKSPQYWEGIRVTDKVTMEIVEMVLAGKVNKQLVGSINANGGKAIGLCGKDANLIVAKASSKKELGLVGEIEQIHPQVIDMLLEKHYIPVIASVAASHDGTTYNLNADVVAGELAIKLKAKKLIFLTDTKGILADINNENSVISTLNLKEAKNLANTISGGMIPKVNACICAVENGVEAAHIIGGKEKHQLLLELLTEKGRGSMIVV</sequence>
<proteinExistence type="inferred from homology"/>
<comment type="function">
    <text evidence="1">Catalyzes the ATP-dependent phosphorylation of N-acetyl-L-glutamate.</text>
</comment>
<comment type="catalytic activity">
    <reaction evidence="1">
        <text>N-acetyl-L-glutamate + ATP = N-acetyl-L-glutamyl 5-phosphate + ADP</text>
        <dbReference type="Rhea" id="RHEA:14629"/>
        <dbReference type="ChEBI" id="CHEBI:30616"/>
        <dbReference type="ChEBI" id="CHEBI:44337"/>
        <dbReference type="ChEBI" id="CHEBI:57936"/>
        <dbReference type="ChEBI" id="CHEBI:456216"/>
        <dbReference type="EC" id="2.7.2.8"/>
    </reaction>
</comment>
<comment type="pathway">
    <text evidence="1">Amino-acid biosynthesis; L-arginine biosynthesis; N(2)-acetyl-L-ornithine from L-glutamate: step 2/4.</text>
</comment>
<comment type="subcellular location">
    <subcellularLocation>
        <location evidence="1">Plastid</location>
        <location evidence="1">Chloroplast</location>
    </subcellularLocation>
</comment>
<comment type="similarity">
    <text evidence="1">Belongs to the acetylglutamate kinase family. ArgB subfamily.</text>
</comment>
<feature type="chain" id="PRO_0000112707" description="Acetylglutamate kinase">
    <location>
        <begin position="1"/>
        <end position="290"/>
    </location>
</feature>
<feature type="binding site" evidence="1">
    <location>
        <begin position="72"/>
        <end position="73"/>
    </location>
    <ligand>
        <name>substrate</name>
    </ligand>
</feature>
<feature type="binding site" evidence="1">
    <location>
        <position position="94"/>
    </location>
    <ligand>
        <name>substrate</name>
    </ligand>
</feature>
<feature type="binding site" evidence="1">
    <location>
        <position position="187"/>
    </location>
    <ligand>
        <name>substrate</name>
    </ligand>
</feature>
<feature type="site" description="Transition state stabilizer" evidence="1">
    <location>
        <position position="40"/>
    </location>
</feature>
<feature type="site" description="Transition state stabilizer" evidence="1">
    <location>
        <position position="248"/>
    </location>
</feature>
<reference key="1">
    <citation type="journal article" date="2003" name="DNA Res.">
        <title>Complete sequence and analysis of the plastid genome of the unicellular red alga Cyanidioschyzon merolae.</title>
        <authorList>
            <person name="Ohta N."/>
            <person name="Matsuzaki M."/>
            <person name="Misumi O."/>
            <person name="Miyagishima S.-Y."/>
            <person name="Nozaki H."/>
            <person name="Tanaka K."/>
            <person name="Shin-i T."/>
            <person name="Kohara Y."/>
            <person name="Kuroiwa T."/>
        </authorList>
    </citation>
    <scope>NUCLEOTIDE SEQUENCE [LARGE SCALE GENOMIC DNA]</scope>
    <source>
        <strain>NIES-3377 / 10D</strain>
    </source>
</reference>
<gene>
    <name evidence="1" type="primary">argB</name>
</gene>